<proteinExistence type="predicted"/>
<gene>
    <name type="ordered locus">BQ2027_MB0491C</name>
</gene>
<sequence length="174" mass="19064">MPRSFDMSADYEGSVEEVHRAFYEADYWKARLAETPVDVATLESIRVGGDSGDDGTIEVVTLQMVRSHNLPGLVTQLHRGDLSVRREETWGPVKEGIATASIAGSIVDAPVNLWGTAVLSPIPESGGSRMTLQVTIQVRIPFIGGKLERLIGTQLSQLVTIEQRFTTLWITNNV</sequence>
<keyword id="KW-1185">Reference proteome</keyword>
<feature type="chain" id="PRO_0000103684" description="Uncharacterized protein Mb0491c">
    <location>
        <begin position="1"/>
        <end position="174"/>
    </location>
</feature>
<protein>
    <recommendedName>
        <fullName>Uncharacterized protein Mb0491c</fullName>
    </recommendedName>
</protein>
<accession>P64702</accession>
<accession>A0A1R3XVG0</accession>
<accession>Q11147</accession>
<accession>X2BF55</accession>
<organism>
    <name type="scientific">Mycobacterium bovis (strain ATCC BAA-935 / AF2122/97)</name>
    <dbReference type="NCBI Taxonomy" id="233413"/>
    <lineage>
        <taxon>Bacteria</taxon>
        <taxon>Bacillati</taxon>
        <taxon>Actinomycetota</taxon>
        <taxon>Actinomycetes</taxon>
        <taxon>Mycobacteriales</taxon>
        <taxon>Mycobacteriaceae</taxon>
        <taxon>Mycobacterium</taxon>
        <taxon>Mycobacterium tuberculosis complex</taxon>
    </lineage>
</organism>
<reference key="1">
    <citation type="journal article" date="2003" name="Proc. Natl. Acad. Sci. U.S.A.">
        <title>The complete genome sequence of Mycobacterium bovis.</title>
        <authorList>
            <person name="Garnier T."/>
            <person name="Eiglmeier K."/>
            <person name="Camus J.-C."/>
            <person name="Medina N."/>
            <person name="Mansoor H."/>
            <person name="Pryor M."/>
            <person name="Duthoy S."/>
            <person name="Grondin S."/>
            <person name="Lacroix C."/>
            <person name="Monsempe C."/>
            <person name="Simon S."/>
            <person name="Harris B."/>
            <person name="Atkin R."/>
            <person name="Doggett J."/>
            <person name="Mayes R."/>
            <person name="Keating L."/>
            <person name="Wheeler P.R."/>
            <person name="Parkhill J."/>
            <person name="Barrell B.G."/>
            <person name="Cole S.T."/>
            <person name="Gordon S.V."/>
            <person name="Hewinson R.G."/>
        </authorList>
    </citation>
    <scope>NUCLEOTIDE SEQUENCE [LARGE SCALE GENOMIC DNA]</scope>
    <source>
        <strain>ATCC BAA-935 / AF2122/97</strain>
    </source>
</reference>
<reference key="2">
    <citation type="journal article" date="2017" name="Genome Announc.">
        <title>Updated reference genome sequence and annotation of Mycobacterium bovis AF2122/97.</title>
        <authorList>
            <person name="Malone K.M."/>
            <person name="Farrell D."/>
            <person name="Stuber T.P."/>
            <person name="Schubert O.T."/>
            <person name="Aebersold R."/>
            <person name="Robbe-Austerman S."/>
            <person name="Gordon S.V."/>
        </authorList>
    </citation>
    <scope>NUCLEOTIDE SEQUENCE [LARGE SCALE GENOMIC DNA]</scope>
    <scope>GENOME REANNOTATION</scope>
    <source>
        <strain>ATCC BAA-935 / AF2122/97</strain>
    </source>
</reference>
<dbReference type="EMBL" id="LT708304">
    <property type="protein sequence ID" value="SIT99086.1"/>
    <property type="molecule type" value="Genomic_DNA"/>
</dbReference>
<dbReference type="RefSeq" id="NP_854154.1">
    <property type="nucleotide sequence ID" value="NC_002945.3"/>
</dbReference>
<dbReference type="RefSeq" id="WP_003402351.1">
    <property type="nucleotide sequence ID" value="NC_002945.4"/>
</dbReference>
<dbReference type="SMR" id="P64702"/>
<dbReference type="PATRIC" id="fig|233413.5.peg.533"/>
<dbReference type="Proteomes" id="UP000001419">
    <property type="component" value="Chromosome"/>
</dbReference>
<dbReference type="Gene3D" id="3.30.530.20">
    <property type="match status" value="1"/>
</dbReference>
<dbReference type="InterPro" id="IPR019639">
    <property type="entry name" value="DUF2505"/>
</dbReference>
<dbReference type="InterPro" id="IPR023393">
    <property type="entry name" value="START-like_dom_sf"/>
</dbReference>
<dbReference type="Pfam" id="PF10698">
    <property type="entry name" value="DUF2505"/>
    <property type="match status" value="1"/>
</dbReference>
<name>Y491_MYCBO</name>